<reference key="1">
    <citation type="journal article" date="1991" name="Gene">
        <title>Molecular characterization of the murine argininosuccinate synthetase locus.</title>
        <authorList>
            <person name="Surh L.C."/>
            <person name="Beaudet A.L."/>
            <person name="O'Brien W.E."/>
        </authorList>
    </citation>
    <scope>NUCLEOTIDE SEQUENCE [GENOMIC DNA / MRNA]</scope>
    <scope>TISSUE SPECIFICITY</scope>
    <source>
        <strain>DBA/2J</strain>
        <tissue>Liver</tissue>
    </source>
</reference>
<reference key="2">
    <citation type="journal article" date="2004" name="Genome Res.">
        <title>The status, quality, and expansion of the NIH full-length cDNA project: the Mammalian Gene Collection (MGC).</title>
        <authorList>
            <consortium name="The MGC Project Team"/>
        </authorList>
    </citation>
    <scope>NUCLEOTIDE SEQUENCE [LARGE SCALE MRNA]</scope>
    <source>
        <strain>Czech II</strain>
        <strain>FVB/N</strain>
        <tissue>Colon</tissue>
        <tissue>Mammary gland</tissue>
    </source>
</reference>
<reference key="3">
    <citation type="submission" date="2007-07" db="UniProtKB">
        <authorList>
            <person name="Lubec G."/>
            <person name="Yang J.W."/>
            <person name="Zigmond M."/>
        </authorList>
    </citation>
    <scope>PROTEIN SEQUENCE OF 128-140</scope>
    <source>
        <tissue>Brain</tissue>
    </source>
</reference>
<reference key="4">
    <citation type="journal article" date="2010" name="Cell">
        <title>A tissue-specific atlas of mouse protein phosphorylation and expression.</title>
        <authorList>
            <person name="Huttlin E.L."/>
            <person name="Jedrychowski M.P."/>
            <person name="Elias J.E."/>
            <person name="Goswami T."/>
            <person name="Rad R."/>
            <person name="Beausoleil S.A."/>
            <person name="Villen J."/>
            <person name="Haas W."/>
            <person name="Sowa M.E."/>
            <person name="Gygi S.P."/>
        </authorList>
    </citation>
    <scope>PHOSPHORYLATION [LARGE SCALE ANALYSIS] AT SER-177 AND SER-219</scope>
    <scope>IDENTIFICATION BY MASS SPECTROMETRY [LARGE SCALE ANALYSIS]</scope>
    <source>
        <tissue>Brain</tissue>
        <tissue>Brown adipose tissue</tissue>
        <tissue>Heart</tissue>
        <tissue>Kidney</tissue>
        <tissue>Liver</tissue>
        <tissue>Lung</tissue>
        <tissue>Pancreas</tissue>
        <tissue>Spleen</tissue>
        <tissue>Testis</tissue>
    </source>
</reference>
<reference key="5">
    <citation type="journal article" date="2011" name="Nat. Med.">
        <title>Requirement of argininosuccinate lyase for systemic nitric oxide production.</title>
        <authorList>
            <person name="Erez A."/>
            <person name="Nagamani S.C."/>
            <person name="Shchelochkov O.A."/>
            <person name="Premkumar M.H."/>
            <person name="Campeau P.M."/>
            <person name="Chen Y."/>
            <person name="Garg H.K."/>
            <person name="Li L."/>
            <person name="Mian A."/>
            <person name="Bertin T.K."/>
            <person name="Black J.O."/>
            <person name="Zeng H."/>
            <person name="Tang Y."/>
            <person name="Reddy A.K."/>
            <person name="Summar M."/>
            <person name="O'Brien W.E."/>
            <person name="Harrison D.G."/>
            <person name="Mitch W.E."/>
            <person name="Marini J.C."/>
            <person name="Aschner J.L."/>
            <person name="Bryan N.S."/>
            <person name="Lee B."/>
        </authorList>
    </citation>
    <scope>INTERACTION WITH ASL; SLC7A1; HSP90AA1; NOS1; NOS2; NOS3</scope>
</reference>
<reference key="6">
    <citation type="journal article" date="2013" name="Proc. Natl. Acad. Sci. U.S.A.">
        <title>Label-free quantitative proteomics of the lysine acetylome in mitochondria identifies substrates of SIRT3 in metabolic pathways.</title>
        <authorList>
            <person name="Rardin M.J."/>
            <person name="Newman J.C."/>
            <person name="Held J.M."/>
            <person name="Cusack M.P."/>
            <person name="Sorensen D.J."/>
            <person name="Li B."/>
            <person name="Schilling B."/>
            <person name="Mooney S.D."/>
            <person name="Kahn C.R."/>
            <person name="Verdin E."/>
            <person name="Gibson B.W."/>
        </authorList>
    </citation>
    <scope>ACETYLATION [LARGE SCALE ANALYSIS] AT LYS-112</scope>
    <scope>IDENTIFICATION BY MASS SPECTROMETRY [LARGE SCALE ANALYSIS]</scope>
    <source>
        <tissue>Liver</tissue>
    </source>
</reference>
<reference key="7">
    <citation type="journal article" date="2017" name="Mol. Cell">
        <title>CLOCK acetylates ASS1 to drive circadian rhythm of ureagenesis.</title>
        <authorList>
            <person name="Lin R."/>
            <person name="Mo Y."/>
            <person name="Zha H."/>
            <person name="Qu Z."/>
            <person name="Xie P."/>
            <person name="Zhu Z.J."/>
            <person name="Xu Y."/>
            <person name="Xiong Y."/>
            <person name="Guan K.L."/>
        </authorList>
    </citation>
    <scope>ACETYLATION</scope>
    <scope>INTERACTION WITH CLOCK</scope>
</reference>
<sequence>MSSKGSVVLAYSGGLDTSCILVWLKEQGYDVIAYLANIGQKEDFEEARKKALKLGAKKVFIEDVSKEFVEEFIWPAVQSSALYEDRYLLGTSLARPCIARRQVEIAQREGAKYVSHGATGKGNDQVRFELTCYSLAPQIKVIAPWRMPEFYNRFKGRNDLMEYAKQHGIPIPVTPKSPWSMDENLMHISYEAGILENPKNQAPPGLYTKTQDPAKAPNSPDVLEIEFKKGVPVKVTNIKDGTTRTTSLELFMYLNEVAGKHGVGRIDIVENRFIGMKSRGIYETPAGTILYHAHLDIEAFTMDREVRKIKQGLGLKFAELVYTGFWHSPECEFVRHCIQKSQERVEGKVQVSVFKGQVYILGRESPLSLYNEELVSMNVQGDYEPIDATGFININSLRLKEYHRLQSKVTAK</sequence>
<dbReference type="EC" id="6.3.4.5" evidence="2"/>
<dbReference type="EMBL" id="M31690">
    <property type="protein sequence ID" value="AAA37266.1"/>
    <property type="molecule type" value="mRNA"/>
</dbReference>
<dbReference type="EMBL" id="M31692">
    <property type="protein sequence ID" value="AAB60707.1"/>
    <property type="molecule type" value="Genomic_DNA"/>
</dbReference>
<dbReference type="EMBL" id="M31694">
    <property type="protein sequence ID" value="AAB60708.1"/>
    <property type="molecule type" value="Genomic_DNA"/>
</dbReference>
<dbReference type="EMBL" id="M31693">
    <property type="protein sequence ID" value="AAB60708.1"/>
    <property type="status" value="JOINED"/>
    <property type="molecule type" value="Genomic_DNA"/>
</dbReference>
<dbReference type="EMBL" id="M31695">
    <property type="protein sequence ID" value="AAB60708.1"/>
    <property type="status" value="JOINED"/>
    <property type="molecule type" value="Genomic_DNA"/>
</dbReference>
<dbReference type="EMBL" id="M31702">
    <property type="protein sequence ID" value="AAB60706.1"/>
    <property type="molecule type" value="Genomic_DNA"/>
</dbReference>
<dbReference type="EMBL" id="BC002074">
    <property type="protein sequence ID" value="AAH02074.1"/>
    <property type="molecule type" value="mRNA"/>
</dbReference>
<dbReference type="EMBL" id="BC087556">
    <property type="protein sequence ID" value="AAH87556.1"/>
    <property type="molecule type" value="mRNA"/>
</dbReference>
<dbReference type="CCDS" id="CCDS15898.1"/>
<dbReference type="PIR" id="JU0463">
    <property type="entry name" value="AJMSRS"/>
</dbReference>
<dbReference type="RefSeq" id="NP_031520.1">
    <property type="nucleotide sequence ID" value="NM_007494.3"/>
</dbReference>
<dbReference type="SMR" id="P16460"/>
<dbReference type="BioGRID" id="198226">
    <property type="interactions" value="17"/>
</dbReference>
<dbReference type="FunCoup" id="P16460">
    <property type="interactions" value="869"/>
</dbReference>
<dbReference type="IntAct" id="P16460">
    <property type="interactions" value="2"/>
</dbReference>
<dbReference type="MINT" id="P16460"/>
<dbReference type="STRING" id="10090.ENSMUSP00000099904"/>
<dbReference type="GlyGen" id="P16460">
    <property type="glycosylation" value="2 sites, 1 O-linked glycan (2 sites)"/>
</dbReference>
<dbReference type="iPTMnet" id="P16460"/>
<dbReference type="MetOSite" id="P16460"/>
<dbReference type="PhosphoSitePlus" id="P16460"/>
<dbReference type="SwissPalm" id="P16460"/>
<dbReference type="REPRODUCTION-2DPAGE" id="P16460"/>
<dbReference type="jPOST" id="P16460"/>
<dbReference type="PaxDb" id="10090-ENSMUSP00000099904"/>
<dbReference type="PeptideAtlas" id="P16460"/>
<dbReference type="ProteomicsDB" id="281854"/>
<dbReference type="Pumba" id="P16460"/>
<dbReference type="Antibodypedia" id="4531">
    <property type="antibodies" value="537 antibodies from 37 providers"/>
</dbReference>
<dbReference type="DNASU" id="11898"/>
<dbReference type="Ensembl" id="ENSMUST00000102840.5">
    <property type="protein sequence ID" value="ENSMUSP00000099904.5"/>
    <property type="gene ID" value="ENSMUSG00000076441.10"/>
</dbReference>
<dbReference type="GeneID" id="11898"/>
<dbReference type="KEGG" id="mmu:11898"/>
<dbReference type="UCSC" id="uc008jdu.1">
    <property type="organism name" value="mouse"/>
</dbReference>
<dbReference type="AGR" id="MGI:88090"/>
<dbReference type="CTD" id="445"/>
<dbReference type="MGI" id="MGI:88090">
    <property type="gene designation" value="Ass1"/>
</dbReference>
<dbReference type="VEuPathDB" id="HostDB:ENSMUSG00000076441"/>
<dbReference type="eggNOG" id="KOG1706">
    <property type="taxonomic scope" value="Eukaryota"/>
</dbReference>
<dbReference type="GeneTree" id="ENSGT00390000004524"/>
<dbReference type="HOGENOM" id="CLU_032784_4_2_1"/>
<dbReference type="InParanoid" id="P16460"/>
<dbReference type="OMA" id="ACGAFHI"/>
<dbReference type="OrthoDB" id="1688907at2759"/>
<dbReference type="PhylomeDB" id="P16460"/>
<dbReference type="TreeFam" id="TF300736"/>
<dbReference type="BRENDA" id="6.3.4.5">
    <property type="organism ID" value="3474"/>
</dbReference>
<dbReference type="Reactome" id="R-MMU-70635">
    <property type="pathway name" value="Urea cycle"/>
</dbReference>
<dbReference type="UniPathway" id="UPA00068">
    <property type="reaction ID" value="UER00113"/>
</dbReference>
<dbReference type="UniPathway" id="UPA00158">
    <property type="reaction ID" value="UER00272"/>
</dbReference>
<dbReference type="BioGRID-ORCS" id="11898">
    <property type="hits" value="6 hits in 78 CRISPR screens"/>
</dbReference>
<dbReference type="ChiTaRS" id="Ass1">
    <property type="organism name" value="mouse"/>
</dbReference>
<dbReference type="PRO" id="PR:P16460"/>
<dbReference type="Proteomes" id="UP000000589">
    <property type="component" value="Chromosome 2"/>
</dbReference>
<dbReference type="RNAct" id="P16460">
    <property type="molecule type" value="protein"/>
</dbReference>
<dbReference type="Bgee" id="ENSMUSG00000076441">
    <property type="expression patterns" value="Expressed in adult mammalian kidney and 105 other cell types or tissues"/>
</dbReference>
<dbReference type="ExpressionAtlas" id="P16460">
    <property type="expression patterns" value="baseline and differential"/>
</dbReference>
<dbReference type="GO" id="GO:0070852">
    <property type="term" value="C:cell body fiber"/>
    <property type="evidence" value="ECO:0007669"/>
    <property type="project" value="Ensembl"/>
</dbReference>
<dbReference type="GO" id="GO:0005829">
    <property type="term" value="C:cytosol"/>
    <property type="evidence" value="ECO:0007669"/>
    <property type="project" value="UniProtKB-SubCell"/>
</dbReference>
<dbReference type="GO" id="GO:0005741">
    <property type="term" value="C:mitochondrial outer membrane"/>
    <property type="evidence" value="ECO:0007669"/>
    <property type="project" value="Ensembl"/>
</dbReference>
<dbReference type="GO" id="GO:0005739">
    <property type="term" value="C:mitochondrion"/>
    <property type="evidence" value="ECO:0000314"/>
    <property type="project" value="MGI"/>
</dbReference>
<dbReference type="GO" id="GO:0043209">
    <property type="term" value="C:myelin sheath"/>
    <property type="evidence" value="ECO:0007005"/>
    <property type="project" value="UniProtKB"/>
</dbReference>
<dbReference type="GO" id="GO:0005654">
    <property type="term" value="C:nucleoplasm"/>
    <property type="evidence" value="ECO:0007669"/>
    <property type="project" value="Ensembl"/>
</dbReference>
<dbReference type="GO" id="GO:0043204">
    <property type="term" value="C:perikaryon"/>
    <property type="evidence" value="ECO:0007669"/>
    <property type="project" value="Ensembl"/>
</dbReference>
<dbReference type="GO" id="GO:0016597">
    <property type="term" value="F:amino acid binding"/>
    <property type="evidence" value="ECO:0007669"/>
    <property type="project" value="Ensembl"/>
</dbReference>
<dbReference type="GO" id="GO:0004055">
    <property type="term" value="F:argininosuccinate synthase activity"/>
    <property type="evidence" value="ECO:0000250"/>
    <property type="project" value="UniProtKB"/>
</dbReference>
<dbReference type="GO" id="GO:0005524">
    <property type="term" value="F:ATP binding"/>
    <property type="evidence" value="ECO:0007669"/>
    <property type="project" value="UniProtKB-KW"/>
</dbReference>
<dbReference type="GO" id="GO:0042802">
    <property type="term" value="F:identical protein binding"/>
    <property type="evidence" value="ECO:0007669"/>
    <property type="project" value="Ensembl"/>
</dbReference>
<dbReference type="GO" id="GO:0015643">
    <property type="term" value="F:toxic substance binding"/>
    <property type="evidence" value="ECO:0007669"/>
    <property type="project" value="Ensembl"/>
</dbReference>
<dbReference type="GO" id="GO:0006953">
    <property type="term" value="P:acute-phase response"/>
    <property type="evidence" value="ECO:0007669"/>
    <property type="project" value="Ensembl"/>
</dbReference>
<dbReference type="GO" id="GO:0000053">
    <property type="term" value="P:argininosuccinate metabolic process"/>
    <property type="evidence" value="ECO:0007669"/>
    <property type="project" value="Ensembl"/>
</dbReference>
<dbReference type="GO" id="GO:0006531">
    <property type="term" value="P:aspartate metabolic process"/>
    <property type="evidence" value="ECO:0007669"/>
    <property type="project" value="Ensembl"/>
</dbReference>
<dbReference type="GO" id="GO:0071418">
    <property type="term" value="P:cellular response to amine stimulus"/>
    <property type="evidence" value="ECO:0007669"/>
    <property type="project" value="Ensembl"/>
</dbReference>
<dbReference type="GO" id="GO:0071230">
    <property type="term" value="P:cellular response to amino acid stimulus"/>
    <property type="evidence" value="ECO:0007669"/>
    <property type="project" value="Ensembl"/>
</dbReference>
<dbReference type="GO" id="GO:0071242">
    <property type="term" value="P:cellular response to ammonium ion"/>
    <property type="evidence" value="ECO:0007669"/>
    <property type="project" value="Ensembl"/>
</dbReference>
<dbReference type="GO" id="GO:0071320">
    <property type="term" value="P:cellular response to cAMP"/>
    <property type="evidence" value="ECO:0007669"/>
    <property type="project" value="Ensembl"/>
</dbReference>
<dbReference type="GO" id="GO:0071549">
    <property type="term" value="P:cellular response to dexamethasone stimulus"/>
    <property type="evidence" value="ECO:0007669"/>
    <property type="project" value="Ensembl"/>
</dbReference>
<dbReference type="GO" id="GO:0071377">
    <property type="term" value="P:cellular response to glucagon stimulus"/>
    <property type="evidence" value="ECO:0007669"/>
    <property type="project" value="Ensembl"/>
</dbReference>
<dbReference type="GO" id="GO:0071499">
    <property type="term" value="P:cellular response to laminar fluid shear stress"/>
    <property type="evidence" value="ECO:0007669"/>
    <property type="project" value="Ensembl"/>
</dbReference>
<dbReference type="GO" id="GO:0071222">
    <property type="term" value="P:cellular response to lipopolysaccharide"/>
    <property type="evidence" value="ECO:0007669"/>
    <property type="project" value="Ensembl"/>
</dbReference>
<dbReference type="GO" id="GO:0071400">
    <property type="term" value="P:cellular response to oleic acid"/>
    <property type="evidence" value="ECO:0007669"/>
    <property type="project" value="Ensembl"/>
</dbReference>
<dbReference type="GO" id="GO:0071356">
    <property type="term" value="P:cellular response to tumor necrosis factor"/>
    <property type="evidence" value="ECO:0007669"/>
    <property type="project" value="Ensembl"/>
</dbReference>
<dbReference type="GO" id="GO:0071346">
    <property type="term" value="P:cellular response to type II interferon"/>
    <property type="evidence" value="ECO:0007669"/>
    <property type="project" value="Ensembl"/>
</dbReference>
<dbReference type="GO" id="GO:0007623">
    <property type="term" value="P:circadian rhythm"/>
    <property type="evidence" value="ECO:0000314"/>
    <property type="project" value="UniProtKB"/>
</dbReference>
<dbReference type="GO" id="GO:0000052">
    <property type="term" value="P:citrulline metabolic process"/>
    <property type="evidence" value="ECO:0007669"/>
    <property type="project" value="Ensembl"/>
</dbReference>
<dbReference type="GO" id="GO:0060539">
    <property type="term" value="P:diaphragm development"/>
    <property type="evidence" value="ECO:0007669"/>
    <property type="project" value="Ensembl"/>
</dbReference>
<dbReference type="GO" id="GO:0001822">
    <property type="term" value="P:kidney development"/>
    <property type="evidence" value="ECO:0007669"/>
    <property type="project" value="Ensembl"/>
</dbReference>
<dbReference type="GO" id="GO:0006526">
    <property type="term" value="P:L-arginine biosynthetic process"/>
    <property type="evidence" value="ECO:0000250"/>
    <property type="project" value="UniProtKB"/>
</dbReference>
<dbReference type="GO" id="GO:0001889">
    <property type="term" value="P:liver development"/>
    <property type="evidence" value="ECO:0007669"/>
    <property type="project" value="Ensembl"/>
</dbReference>
<dbReference type="GO" id="GO:0007494">
    <property type="term" value="P:midgut development"/>
    <property type="evidence" value="ECO:0007669"/>
    <property type="project" value="Ensembl"/>
</dbReference>
<dbReference type="GO" id="GO:1903038">
    <property type="term" value="P:negative regulation of leukocyte cell-cell adhesion"/>
    <property type="evidence" value="ECO:0007669"/>
    <property type="project" value="Ensembl"/>
</dbReference>
<dbReference type="GO" id="GO:0045429">
    <property type="term" value="P:positive regulation of nitric oxide biosynthetic process"/>
    <property type="evidence" value="ECO:0007669"/>
    <property type="project" value="Ensembl"/>
</dbReference>
<dbReference type="GO" id="GO:0032355">
    <property type="term" value="P:response to estradiol"/>
    <property type="evidence" value="ECO:0007669"/>
    <property type="project" value="Ensembl"/>
</dbReference>
<dbReference type="GO" id="GO:0060416">
    <property type="term" value="P:response to growth hormone"/>
    <property type="evidence" value="ECO:0007669"/>
    <property type="project" value="Ensembl"/>
</dbReference>
<dbReference type="GO" id="GO:0010046">
    <property type="term" value="P:response to mycotoxin"/>
    <property type="evidence" value="ECO:0007669"/>
    <property type="project" value="Ensembl"/>
</dbReference>
<dbReference type="GO" id="GO:0007584">
    <property type="term" value="P:response to nutrient"/>
    <property type="evidence" value="ECO:0007669"/>
    <property type="project" value="Ensembl"/>
</dbReference>
<dbReference type="GO" id="GO:0009410">
    <property type="term" value="P:response to xenobiotic stimulus"/>
    <property type="evidence" value="ECO:0007669"/>
    <property type="project" value="Ensembl"/>
</dbReference>
<dbReference type="GO" id="GO:0010043">
    <property type="term" value="P:response to zinc ion"/>
    <property type="evidence" value="ECO:0007669"/>
    <property type="project" value="Ensembl"/>
</dbReference>
<dbReference type="GO" id="GO:0000050">
    <property type="term" value="P:urea cycle"/>
    <property type="evidence" value="ECO:0000250"/>
    <property type="project" value="UniProtKB"/>
</dbReference>
<dbReference type="CDD" id="cd01999">
    <property type="entry name" value="ASS"/>
    <property type="match status" value="1"/>
</dbReference>
<dbReference type="FunFam" id="3.40.50.620:FF:000019">
    <property type="entry name" value="Argininosuccinate synthase"/>
    <property type="match status" value="1"/>
</dbReference>
<dbReference type="FunFam" id="1.20.5.470:FF:000003">
    <property type="entry name" value="Argininosuccinate synthase 1"/>
    <property type="match status" value="1"/>
</dbReference>
<dbReference type="FunFam" id="3.90.1260.10:FF:000005">
    <property type="entry name" value="Argininosuccinate synthase 1"/>
    <property type="match status" value="1"/>
</dbReference>
<dbReference type="Gene3D" id="3.90.1260.10">
    <property type="entry name" value="Argininosuccinate synthetase, chain A, domain 2"/>
    <property type="match status" value="1"/>
</dbReference>
<dbReference type="Gene3D" id="3.40.50.620">
    <property type="entry name" value="HUPs"/>
    <property type="match status" value="1"/>
</dbReference>
<dbReference type="Gene3D" id="1.20.5.470">
    <property type="entry name" value="Single helix bin"/>
    <property type="match status" value="1"/>
</dbReference>
<dbReference type="HAMAP" id="MF_00005">
    <property type="entry name" value="Arg_succ_synth_type1"/>
    <property type="match status" value="1"/>
</dbReference>
<dbReference type="InterPro" id="IPR048268">
    <property type="entry name" value="Arginosuc_syn_C"/>
</dbReference>
<dbReference type="InterPro" id="IPR048267">
    <property type="entry name" value="Arginosuc_syn_N"/>
</dbReference>
<dbReference type="InterPro" id="IPR001518">
    <property type="entry name" value="Arginosuc_synth"/>
</dbReference>
<dbReference type="InterPro" id="IPR018223">
    <property type="entry name" value="Arginosuc_synth_CS"/>
</dbReference>
<dbReference type="InterPro" id="IPR023434">
    <property type="entry name" value="Arginosuc_synth_type_1_subfam"/>
</dbReference>
<dbReference type="InterPro" id="IPR024074">
    <property type="entry name" value="AS_cat/multimer_dom_body"/>
</dbReference>
<dbReference type="InterPro" id="IPR014729">
    <property type="entry name" value="Rossmann-like_a/b/a_fold"/>
</dbReference>
<dbReference type="NCBIfam" id="TIGR00032">
    <property type="entry name" value="argG"/>
    <property type="match status" value="1"/>
</dbReference>
<dbReference type="NCBIfam" id="NF001770">
    <property type="entry name" value="PRK00509.1"/>
    <property type="match status" value="1"/>
</dbReference>
<dbReference type="PANTHER" id="PTHR11587">
    <property type="entry name" value="ARGININOSUCCINATE SYNTHASE"/>
    <property type="match status" value="1"/>
</dbReference>
<dbReference type="PANTHER" id="PTHR11587:SF2">
    <property type="entry name" value="ARGININOSUCCINATE SYNTHASE"/>
    <property type="match status" value="1"/>
</dbReference>
<dbReference type="Pfam" id="PF20979">
    <property type="entry name" value="Arginosuc_syn_C"/>
    <property type="match status" value="1"/>
</dbReference>
<dbReference type="Pfam" id="PF00764">
    <property type="entry name" value="Arginosuc_synth"/>
    <property type="match status" value="1"/>
</dbReference>
<dbReference type="SUPFAM" id="SSF52402">
    <property type="entry name" value="Adenine nucleotide alpha hydrolases-like"/>
    <property type="match status" value="1"/>
</dbReference>
<dbReference type="SUPFAM" id="SSF69864">
    <property type="entry name" value="Argininosuccinate synthetase, C-terminal domain"/>
    <property type="match status" value="1"/>
</dbReference>
<dbReference type="PROSITE" id="PS00564">
    <property type="entry name" value="ARGININOSUCCIN_SYN_1"/>
    <property type="match status" value="1"/>
</dbReference>
<dbReference type="PROSITE" id="PS00565">
    <property type="entry name" value="ARGININOSUCCIN_SYN_2"/>
    <property type="match status" value="1"/>
</dbReference>
<keyword id="KW-0007">Acetylation</keyword>
<keyword id="KW-0028">Amino-acid biosynthesis</keyword>
<keyword id="KW-0055">Arginine biosynthesis</keyword>
<keyword id="KW-0067">ATP-binding</keyword>
<keyword id="KW-0963">Cytoplasm</keyword>
<keyword id="KW-0903">Direct protein sequencing</keyword>
<keyword id="KW-0436">Ligase</keyword>
<keyword id="KW-0547">Nucleotide-binding</keyword>
<keyword id="KW-0597">Phosphoprotein</keyword>
<keyword id="KW-1185">Reference proteome</keyword>
<keyword id="KW-0835">Urea cycle</keyword>
<protein>
    <recommendedName>
        <fullName evidence="8">Argininosuccinate synthase</fullName>
        <ecNumber evidence="2">6.3.4.5</ecNumber>
    </recommendedName>
    <alternativeName>
        <fullName>Citrulline--aspartate ligase</fullName>
    </alternativeName>
</protein>
<accession>P16460</accession>
<comment type="function">
    <text evidence="2">One of the enzymes of the urea cycle, the metabolic pathway transforming neurotoxic amonia produced by protein catabolism into inocuous urea in the liver of ureotelic animals. Catalyzes the formation of arginosuccinate from aspartate, citrulline and ATP and together with ASL it is responsible for the biosynthesis of arginine in most body tissues.</text>
</comment>
<comment type="catalytic activity">
    <reaction evidence="2">
        <text>L-citrulline + L-aspartate + ATP = 2-(N(omega)-L-arginino)succinate + AMP + diphosphate + H(+)</text>
        <dbReference type="Rhea" id="RHEA:10932"/>
        <dbReference type="ChEBI" id="CHEBI:15378"/>
        <dbReference type="ChEBI" id="CHEBI:29991"/>
        <dbReference type="ChEBI" id="CHEBI:30616"/>
        <dbReference type="ChEBI" id="CHEBI:33019"/>
        <dbReference type="ChEBI" id="CHEBI:57472"/>
        <dbReference type="ChEBI" id="CHEBI:57743"/>
        <dbReference type="ChEBI" id="CHEBI:456215"/>
        <dbReference type="EC" id="6.3.4.5"/>
    </reaction>
</comment>
<comment type="pathway">
    <text evidence="2">Amino-acid biosynthesis; L-arginine biosynthesis; L-arginine from L-ornithine and carbamoyl phosphate: step 2/3.</text>
</comment>
<comment type="pathway">
    <text evidence="2">Nitrogen metabolism; urea cycle; (N(omega)-L-arginino)succinate from L-aspartate and L-citrulline: step 1/1.</text>
</comment>
<comment type="subunit">
    <text evidence="2 5 6">Homotetramer. Interacts with NMRAL1 (By similarity). Interacts with CLOCK; in a circadian manner (PubMed:28985504). Forms tissue-specific complexes with ASL, SLC7A1, HSP90AA1 and nitric oxide synthase NOS1, NOS2 or NOS3; the complex regulates cell-autonomous L-arginine synthesis and citrulline recycling while channeling extracellular L-arginine to nitric oxide synthesis pathway.</text>
</comment>
<comment type="subcellular location">
    <subcellularLocation>
        <location evidence="2">Cytoplasm</location>
        <location evidence="2">Cytosol</location>
    </subcellularLocation>
</comment>
<comment type="tissue specificity">
    <text evidence="4">Widely expressed.</text>
</comment>
<comment type="developmental stage">
    <text evidence="4">Expressed in fetal liver.</text>
</comment>
<comment type="PTM">
    <text evidence="6">Acetylated by CLOCK in a circadian manner which negatively regulates its enzyme activity. Deacetylated by histone deacetylases.</text>
</comment>
<comment type="similarity">
    <text evidence="8">Belongs to the argininosuccinate synthase family. Type 1 subfamily.</text>
</comment>
<organism>
    <name type="scientific">Mus musculus</name>
    <name type="common">Mouse</name>
    <dbReference type="NCBI Taxonomy" id="10090"/>
    <lineage>
        <taxon>Eukaryota</taxon>
        <taxon>Metazoa</taxon>
        <taxon>Chordata</taxon>
        <taxon>Craniata</taxon>
        <taxon>Vertebrata</taxon>
        <taxon>Euteleostomi</taxon>
        <taxon>Mammalia</taxon>
        <taxon>Eutheria</taxon>
        <taxon>Euarchontoglires</taxon>
        <taxon>Glires</taxon>
        <taxon>Rodentia</taxon>
        <taxon>Myomorpha</taxon>
        <taxon>Muroidea</taxon>
        <taxon>Muridae</taxon>
        <taxon>Murinae</taxon>
        <taxon>Mus</taxon>
        <taxon>Mus</taxon>
    </lineage>
</organism>
<gene>
    <name evidence="9" type="primary">Ass1</name>
    <name evidence="7" type="synonym">Ass</name>
</gene>
<name>ASSY_MOUSE</name>
<feature type="chain" id="PRO_0000148555" description="Argininosuccinate synthase">
    <location>
        <begin position="1"/>
        <end position="412"/>
    </location>
</feature>
<feature type="binding site" evidence="1">
    <location>
        <begin position="10"/>
        <end position="18"/>
    </location>
    <ligand>
        <name>ATP</name>
        <dbReference type="ChEBI" id="CHEBI:30616"/>
    </ligand>
</feature>
<feature type="binding site" evidence="1">
    <location>
        <position position="36"/>
    </location>
    <ligand>
        <name>ATP</name>
        <dbReference type="ChEBI" id="CHEBI:30616"/>
    </ligand>
</feature>
<feature type="binding site" evidence="2">
    <location>
        <position position="87"/>
    </location>
    <ligand>
        <name>L-citrulline</name>
        <dbReference type="ChEBI" id="CHEBI:57743"/>
    </ligand>
</feature>
<feature type="binding site" evidence="2">
    <location>
        <position position="92"/>
    </location>
    <ligand>
        <name>L-citrulline</name>
        <dbReference type="ChEBI" id="CHEBI:57743"/>
    </ligand>
</feature>
<feature type="binding site" evidence="1">
    <location>
        <begin position="115"/>
        <end position="123"/>
    </location>
    <ligand>
        <name>ATP</name>
        <dbReference type="ChEBI" id="CHEBI:30616"/>
    </ligand>
</feature>
<feature type="binding site" evidence="2">
    <location>
        <position position="119"/>
    </location>
    <ligand>
        <name>L-aspartate</name>
        <dbReference type="ChEBI" id="CHEBI:29991"/>
    </ligand>
</feature>
<feature type="binding site" evidence="2">
    <location>
        <position position="123"/>
    </location>
    <ligand>
        <name>L-aspartate</name>
        <dbReference type="ChEBI" id="CHEBI:29991"/>
    </ligand>
</feature>
<feature type="binding site" evidence="2">
    <location>
        <position position="123"/>
    </location>
    <ligand>
        <name>L-citrulline</name>
        <dbReference type="ChEBI" id="CHEBI:57743"/>
    </ligand>
</feature>
<feature type="binding site" evidence="2">
    <location>
        <position position="124"/>
    </location>
    <ligand>
        <name>L-aspartate</name>
        <dbReference type="ChEBI" id="CHEBI:29991"/>
    </ligand>
</feature>
<feature type="binding site" evidence="2">
    <location>
        <position position="127"/>
    </location>
    <ligand>
        <name>L-citrulline</name>
        <dbReference type="ChEBI" id="CHEBI:57743"/>
    </ligand>
</feature>
<feature type="binding site" evidence="2">
    <location>
        <position position="180"/>
    </location>
    <ligand>
        <name>L-citrulline</name>
        <dbReference type="ChEBI" id="CHEBI:57743"/>
    </ligand>
</feature>
<feature type="binding site" evidence="2">
    <location>
        <position position="189"/>
    </location>
    <ligand>
        <name>L-citrulline</name>
        <dbReference type="ChEBI" id="CHEBI:57743"/>
    </ligand>
</feature>
<feature type="binding site" evidence="2">
    <location>
        <position position="270"/>
    </location>
    <ligand>
        <name>L-citrulline</name>
        <dbReference type="ChEBI" id="CHEBI:57743"/>
    </ligand>
</feature>
<feature type="binding site" evidence="2">
    <location>
        <position position="282"/>
    </location>
    <ligand>
        <name>L-citrulline</name>
        <dbReference type="ChEBI" id="CHEBI:57743"/>
    </ligand>
</feature>
<feature type="modified residue" description="Phosphotyrosine" evidence="3">
    <location>
        <position position="87"/>
    </location>
</feature>
<feature type="modified residue" description="N6-acetyllysine" evidence="11">
    <location>
        <position position="112"/>
    </location>
</feature>
<feature type="modified residue" description="Phosphotyrosine" evidence="2">
    <location>
        <position position="113"/>
    </location>
</feature>
<feature type="modified residue" description="N6-acetyllysine; by CLOCK" evidence="2">
    <location>
        <position position="165"/>
    </location>
</feature>
<feature type="modified residue" description="N6-acetyllysine; by CLOCK" evidence="2">
    <location>
        <position position="176"/>
    </location>
</feature>
<feature type="modified residue" description="Phosphoserine" evidence="10">
    <location>
        <position position="177"/>
    </location>
</feature>
<feature type="modified residue" description="Phosphoserine" evidence="2">
    <location>
        <position position="180"/>
    </location>
</feature>
<feature type="modified residue" description="Phosphoserine" evidence="10">
    <location>
        <position position="219"/>
    </location>
</feature>
<proteinExistence type="evidence at protein level"/>
<evidence type="ECO:0000250" key="1"/>
<evidence type="ECO:0000250" key="2">
    <source>
        <dbReference type="UniProtKB" id="P00966"/>
    </source>
</evidence>
<evidence type="ECO:0000250" key="3">
    <source>
        <dbReference type="UniProtKB" id="P09034"/>
    </source>
</evidence>
<evidence type="ECO:0000269" key="4">
    <source>
    </source>
</evidence>
<evidence type="ECO:0000269" key="5">
    <source>
    </source>
</evidence>
<evidence type="ECO:0000269" key="6">
    <source>
    </source>
</evidence>
<evidence type="ECO:0000303" key="7">
    <source>
    </source>
</evidence>
<evidence type="ECO:0000305" key="8"/>
<evidence type="ECO:0000312" key="9">
    <source>
        <dbReference type="MGI" id="MGI:88090"/>
    </source>
</evidence>
<evidence type="ECO:0007744" key="10">
    <source>
    </source>
</evidence>
<evidence type="ECO:0007744" key="11">
    <source>
    </source>
</evidence>